<sequence length="99" mass="11161">MLKPNMLIIIFIIVCLFSIIIFTVLKSKRGDDDESDDGFSCYNKPIGVNFPHPTRCDAFYMCVGLNQKLELICPEGFEFDPDVKNCVPISDYGCTANQN</sequence>
<name>AC150_NPVAC</name>
<evidence type="ECO:0000255" key="1">
    <source>
        <dbReference type="PROSITE-ProRule" id="PRU00144"/>
    </source>
</evidence>
<evidence type="ECO:0000269" key="2">
    <source>
    </source>
</evidence>
<proteinExistence type="predicted"/>
<feature type="chain" id="PRO_0000133074" description="Protein AC150">
    <location>
        <begin position="1"/>
        <end position="99"/>
    </location>
</feature>
<feature type="domain" description="Chitin-binding type-2" evidence="1">
    <location>
        <begin position="38"/>
        <end position="96"/>
    </location>
</feature>
<feature type="disulfide bond" evidence="1">
    <location>
        <begin position="73"/>
        <end position="86"/>
    </location>
</feature>
<reference key="1">
    <citation type="journal article" date="1994" name="Virology">
        <title>The complete DNA sequence of Autographa californica nuclear polyhedrosis virus.</title>
        <authorList>
            <person name="Ayres M.D."/>
            <person name="Howard S.C."/>
            <person name="Kuzio J."/>
            <person name="Lopez-Ferber M."/>
            <person name="Possee R.D."/>
        </authorList>
    </citation>
    <scope>NUCLEOTIDE SEQUENCE [LARGE SCALE GENOMIC DNA]</scope>
    <source>
        <strain>C6</strain>
    </source>
</reference>
<reference key="2">
    <citation type="journal article" date="2004" name="J. Virol.">
        <title>Characterization of two Autographa californica nucleopolyhedrovirus proteins, Ac145 and Ac150, which affect oral infectivity in a host-dependent manner.</title>
        <authorList>
            <person name="Lapointe R."/>
            <person name="Popham H.J."/>
            <person name="Straschil U."/>
            <person name="Goulding D."/>
            <person name="O'Reilly D.R."/>
            <person name="Olszewski J.A."/>
        </authorList>
    </citation>
    <scope>FUNCTION</scope>
    <scope>SUBCELLULAR LOCATION</scope>
</reference>
<protein>
    <recommendedName>
        <fullName>Protein AC150</fullName>
    </recommendedName>
</protein>
<organism>
    <name type="scientific">Autographa californica nuclear polyhedrosis virus</name>
    <name type="common">AcMNPV</name>
    <dbReference type="NCBI Taxonomy" id="46015"/>
    <lineage>
        <taxon>Viruses</taxon>
        <taxon>Viruses incertae sedis</taxon>
        <taxon>Naldaviricetes</taxon>
        <taxon>Lefavirales</taxon>
        <taxon>Baculoviridae</taxon>
        <taxon>Alphabaculovirus</taxon>
        <taxon>Alphabaculovirus aucalifornicae</taxon>
    </lineage>
</organism>
<dbReference type="EMBL" id="L22858">
    <property type="protein sequence ID" value="AAA66780.1"/>
    <property type="molecule type" value="Genomic_DNA"/>
</dbReference>
<dbReference type="PIR" id="H72868">
    <property type="entry name" value="H72868"/>
</dbReference>
<dbReference type="RefSeq" id="NP_054181.1">
    <property type="nucleotide sequence ID" value="NC_001623.1"/>
</dbReference>
<dbReference type="SMR" id="P41707"/>
<dbReference type="GeneID" id="1403983"/>
<dbReference type="KEGG" id="vg:1403983"/>
<dbReference type="OrthoDB" id="28497at10239"/>
<dbReference type="Proteomes" id="UP000008292">
    <property type="component" value="Segment"/>
</dbReference>
<dbReference type="GO" id="GO:0005576">
    <property type="term" value="C:extracellular region"/>
    <property type="evidence" value="ECO:0007669"/>
    <property type="project" value="InterPro"/>
</dbReference>
<dbReference type="GO" id="GO:0042025">
    <property type="term" value="C:host cell nucleus"/>
    <property type="evidence" value="ECO:0007669"/>
    <property type="project" value="UniProtKB-SubCell"/>
</dbReference>
<dbReference type="GO" id="GO:0044423">
    <property type="term" value="C:virion component"/>
    <property type="evidence" value="ECO:0007669"/>
    <property type="project" value="UniProtKB-KW"/>
</dbReference>
<dbReference type="GO" id="GO:0008061">
    <property type="term" value="F:chitin binding"/>
    <property type="evidence" value="ECO:0007669"/>
    <property type="project" value="InterPro"/>
</dbReference>
<dbReference type="Gene3D" id="2.170.140.10">
    <property type="entry name" value="Chitin binding domain"/>
    <property type="match status" value="1"/>
</dbReference>
<dbReference type="InterPro" id="IPR002557">
    <property type="entry name" value="Chitin-bd_dom"/>
</dbReference>
<dbReference type="InterPro" id="IPR036508">
    <property type="entry name" value="Chitin-bd_dom_sf"/>
</dbReference>
<dbReference type="Pfam" id="PF01607">
    <property type="entry name" value="CBM_14"/>
    <property type="match status" value="1"/>
</dbReference>
<dbReference type="SMART" id="SM00494">
    <property type="entry name" value="ChtBD2"/>
    <property type="match status" value="1"/>
</dbReference>
<dbReference type="SUPFAM" id="SSF57625">
    <property type="entry name" value="Invertebrate chitin-binding proteins"/>
    <property type="match status" value="1"/>
</dbReference>
<dbReference type="PROSITE" id="PS50940">
    <property type="entry name" value="CHIT_BIND_II"/>
    <property type="match status" value="1"/>
</dbReference>
<comment type="function">
    <text evidence="2">Plays a role in primary oral infection of the host.</text>
</comment>
<comment type="subcellular location">
    <subcellularLocation>
        <location evidence="2">Host nucleus</location>
    </subcellularLocation>
    <subcellularLocation>
        <location evidence="2">Virion</location>
    </subcellularLocation>
</comment>
<organismHost>
    <name type="scientific">Lepidoptera</name>
    <name type="common">butterflies and moths</name>
    <dbReference type="NCBI Taxonomy" id="7088"/>
</organismHost>
<accession>P41707</accession>
<keyword id="KW-1015">Disulfide bond</keyword>
<keyword id="KW-1048">Host nucleus</keyword>
<keyword id="KW-1185">Reference proteome</keyword>
<keyword id="KW-0946">Virion</keyword>